<name>TMAR_YERPN</name>
<sequence length="105" mass="12461">MDNASKPTFQDVLEFVRMFRRKNKLQREIVDNEKKIRDNQKRVLLLDNLSEYIKPGMSIEEVQAIIANMRGDYEDRVDDYIIKNADLSKERRELSKKLKAMGEVK</sequence>
<reference key="1">
    <citation type="journal article" date="2006" name="J. Bacteriol.">
        <title>Complete genome sequence of Yersinia pestis strains Antiqua and Nepal516: evidence of gene reduction in an emerging pathogen.</title>
        <authorList>
            <person name="Chain P.S.G."/>
            <person name="Hu P."/>
            <person name="Malfatti S.A."/>
            <person name="Radnedge L."/>
            <person name="Larimer F."/>
            <person name="Vergez L.M."/>
            <person name="Worsham P."/>
            <person name="Chu M.C."/>
            <person name="Andersen G.L."/>
        </authorList>
    </citation>
    <scope>NUCLEOTIDE SEQUENCE [LARGE SCALE GENOMIC DNA]</scope>
    <source>
        <strain>Nepal516</strain>
    </source>
</reference>
<reference key="2">
    <citation type="submission" date="2009-04" db="EMBL/GenBank/DDBJ databases">
        <title>Yersinia pestis Nepal516A whole genome shotgun sequencing project.</title>
        <authorList>
            <person name="Plunkett G. III"/>
            <person name="Anderson B.D."/>
            <person name="Baumler D.J."/>
            <person name="Burland V."/>
            <person name="Cabot E.L."/>
            <person name="Glasner J.D."/>
            <person name="Mau B."/>
            <person name="Neeno-Eckwall E."/>
            <person name="Perna N.T."/>
            <person name="Munk A.C."/>
            <person name="Tapia R."/>
            <person name="Green L.D."/>
            <person name="Rogers Y.C."/>
            <person name="Detter J.C."/>
            <person name="Bruce D.C."/>
            <person name="Brettin T.S."/>
        </authorList>
    </citation>
    <scope>NUCLEOTIDE SEQUENCE [LARGE SCALE GENOMIC DNA]</scope>
    <source>
        <strain>Nepal516</strain>
    </source>
</reference>
<proteinExistence type="inferred from homology"/>
<comment type="function">
    <text evidence="1">Pole-localizer protein involved in the regulation of several cellular processes.</text>
</comment>
<comment type="subcellular location">
    <subcellularLocation>
        <location evidence="1">Cytoplasm</location>
    </subcellularLocation>
</comment>
<comment type="similarity">
    <text evidence="1">Belongs to the pole-localizer TmaR family.</text>
</comment>
<evidence type="ECO:0000255" key="1">
    <source>
        <dbReference type="HAMAP-Rule" id="MF_00683"/>
    </source>
</evidence>
<accession>Q1CGY2</accession>
<accession>C4GV99</accession>
<dbReference type="EMBL" id="CP000305">
    <property type="protein sequence ID" value="ABG18748.1"/>
    <property type="molecule type" value="Genomic_DNA"/>
</dbReference>
<dbReference type="EMBL" id="ACNQ01000014">
    <property type="protein sequence ID" value="EEO75983.1"/>
    <property type="molecule type" value="Genomic_DNA"/>
</dbReference>
<dbReference type="SMR" id="Q1CGY2"/>
<dbReference type="KEGG" id="ypn:YPN_2420"/>
<dbReference type="HOGENOM" id="CLU_153146_0_0_6"/>
<dbReference type="Proteomes" id="UP000008936">
    <property type="component" value="Chromosome"/>
</dbReference>
<dbReference type="GO" id="GO:0005829">
    <property type="term" value="C:cytosol"/>
    <property type="evidence" value="ECO:0007669"/>
    <property type="project" value="TreeGrafter"/>
</dbReference>
<dbReference type="HAMAP" id="MF_00683">
    <property type="entry name" value="Pole_loc_TmaR"/>
    <property type="match status" value="1"/>
</dbReference>
<dbReference type="InterPro" id="IPR007458">
    <property type="entry name" value="DUF496"/>
</dbReference>
<dbReference type="InterPro" id="IPR053375">
    <property type="entry name" value="UPF0265"/>
</dbReference>
<dbReference type="NCBIfam" id="NF003844">
    <property type="entry name" value="PRK05423.1"/>
    <property type="match status" value="1"/>
</dbReference>
<dbReference type="NCBIfam" id="NF040881">
    <property type="entry name" value="PTS_reg_TmaR"/>
    <property type="match status" value="1"/>
</dbReference>
<dbReference type="PANTHER" id="PTHR39591">
    <property type="entry name" value="UPF0265 PROTEIN YEEX"/>
    <property type="match status" value="1"/>
</dbReference>
<dbReference type="PANTHER" id="PTHR39591:SF1">
    <property type="entry name" value="UPF0265 PROTEIN YEEX"/>
    <property type="match status" value="1"/>
</dbReference>
<dbReference type="Pfam" id="PF04363">
    <property type="entry name" value="DUF496"/>
    <property type="match status" value="1"/>
</dbReference>
<dbReference type="PIRSF" id="PIRSF028773">
    <property type="entry name" value="UCP028773"/>
    <property type="match status" value="1"/>
</dbReference>
<gene>
    <name evidence="1" type="primary">tmaR</name>
    <name type="ordered locus">YPN_2420</name>
    <name type="ORF">YP516_2728</name>
</gene>
<feature type="chain" id="PRO_1000044941" description="Pole-localizer protein TmaR">
    <location>
        <begin position="1"/>
        <end position="105"/>
    </location>
</feature>
<feature type="coiled-coil region" evidence="1">
    <location>
        <begin position="22"/>
        <end position="42"/>
    </location>
</feature>
<feature type="coiled-coil region" evidence="1">
    <location>
        <begin position="77"/>
        <end position="104"/>
    </location>
</feature>
<organism>
    <name type="scientific">Yersinia pestis bv. Antiqua (strain Nepal516)</name>
    <dbReference type="NCBI Taxonomy" id="377628"/>
    <lineage>
        <taxon>Bacteria</taxon>
        <taxon>Pseudomonadati</taxon>
        <taxon>Pseudomonadota</taxon>
        <taxon>Gammaproteobacteria</taxon>
        <taxon>Enterobacterales</taxon>
        <taxon>Yersiniaceae</taxon>
        <taxon>Yersinia</taxon>
    </lineage>
</organism>
<protein>
    <recommendedName>
        <fullName evidence="1">Pole-localizer protein TmaR</fullName>
    </recommendedName>
</protein>
<keyword id="KW-0175">Coiled coil</keyword>
<keyword id="KW-0963">Cytoplasm</keyword>